<sequence length="151" mass="16182">MKNKLLFMMLTILGAPGIATATNYDLARSEYNFAVNELSKSSFNQAAIIGQVGTDNSARVRQEGSKLLSVISQEGGNNRAKVDQAGNYNFAYIEQTGNANDASISQSAYGNSAAIIQKGSGNKANITQYGTQKTAVVVQKQSHMAIRVTQR</sequence>
<feature type="signal peptide" evidence="1">
    <location>
        <begin position="1"/>
        <end position="21"/>
    </location>
</feature>
<feature type="chain" id="PRO_0000006377" description="Minor curlin subunit">
    <location>
        <begin position="22"/>
        <end position="151"/>
    </location>
</feature>
<proteinExistence type="inferred from homology"/>
<evidence type="ECO:0000255" key="1"/>
<evidence type="ECO:0000305" key="2"/>
<protein>
    <recommendedName>
        <fullName>Minor curlin subunit</fullName>
    </recommendedName>
    <alternativeName>
        <fullName>Fimbrin SEF17 minor subunit</fullName>
    </alternativeName>
</protein>
<accession>P0A1E8</accession>
<accession>P55226</accession>
<organism>
    <name type="scientific">Salmonella typhimurium (strain LT2 / SGSC1412 / ATCC 700720)</name>
    <dbReference type="NCBI Taxonomy" id="99287"/>
    <lineage>
        <taxon>Bacteria</taxon>
        <taxon>Pseudomonadati</taxon>
        <taxon>Pseudomonadota</taxon>
        <taxon>Gammaproteobacteria</taxon>
        <taxon>Enterobacterales</taxon>
        <taxon>Enterobacteriaceae</taxon>
        <taxon>Salmonella</taxon>
    </lineage>
</organism>
<comment type="function">
    <text>Curlin is the structural subunit of the curli. Curli are coiled surface structures that assemble preferentially at growth temperatures below 37 degrees Celsius. Curli can bind to fibronectin. The minor subunit is the nucleation component of curlin monomers.</text>
</comment>
<comment type="subcellular location">
    <subcellularLocation>
        <location>Fimbrium</location>
    </subcellularLocation>
    <text>Part of the curli surface structure.</text>
</comment>
<comment type="similarity">
    <text evidence="2">Belongs to the CsgA/CsgB family.</text>
</comment>
<dbReference type="EMBL" id="AJ002301">
    <property type="protein sequence ID" value="CAA05316.1"/>
    <property type="molecule type" value="Genomic_DNA"/>
</dbReference>
<dbReference type="EMBL" id="AE006468">
    <property type="protein sequence ID" value="AAL20073.1"/>
    <property type="molecule type" value="Genomic_DNA"/>
</dbReference>
<dbReference type="RefSeq" id="NP_460114.1">
    <property type="nucleotide sequence ID" value="NC_003197.2"/>
</dbReference>
<dbReference type="RefSeq" id="WP_000791655.1">
    <property type="nucleotide sequence ID" value="NC_003197.2"/>
</dbReference>
<dbReference type="SMR" id="P0A1E8"/>
<dbReference type="STRING" id="99287.STM1143"/>
<dbReference type="PaxDb" id="99287-STM1143"/>
<dbReference type="GeneID" id="1252661"/>
<dbReference type="KEGG" id="stm:STM1143"/>
<dbReference type="PATRIC" id="fig|99287.12.peg.1210"/>
<dbReference type="HOGENOM" id="CLU_116264_1_0_6"/>
<dbReference type="OMA" id="NFGNTAY"/>
<dbReference type="PhylomeDB" id="P0A1E8"/>
<dbReference type="BioCyc" id="SENT99287:STM1143-MONOMER"/>
<dbReference type="Proteomes" id="UP000001014">
    <property type="component" value="Chromosome"/>
</dbReference>
<dbReference type="GO" id="GO:0009289">
    <property type="term" value="C:pilus"/>
    <property type="evidence" value="ECO:0007669"/>
    <property type="project" value="UniProtKB-SubCell"/>
</dbReference>
<dbReference type="GO" id="GO:0007155">
    <property type="term" value="P:cell adhesion"/>
    <property type="evidence" value="ECO:0007669"/>
    <property type="project" value="InterPro"/>
</dbReference>
<dbReference type="InterPro" id="IPR009742">
    <property type="entry name" value="Curlin_rpt"/>
</dbReference>
<dbReference type="NCBIfam" id="NF007506">
    <property type="entry name" value="PRK10101.1"/>
    <property type="match status" value="1"/>
</dbReference>
<dbReference type="Pfam" id="PF07012">
    <property type="entry name" value="Curlin_rpt"/>
    <property type="match status" value="3"/>
</dbReference>
<gene>
    <name type="primary">csgB</name>
    <name type="synonym">agfB</name>
    <name type="ordered locus">STM1143</name>
</gene>
<keyword id="KW-0281">Fimbrium</keyword>
<keyword id="KW-1185">Reference proteome</keyword>
<keyword id="KW-0732">Signal</keyword>
<reference key="1">
    <citation type="journal article" date="1998" name="J. Bacteriol.">
        <title>Curli fibers are highly conserved between Salmonella typhimurium and Escherichia coli with respect to operon structure and regulation.</title>
        <authorList>
            <person name="Romling U."/>
            <person name="Bian Z."/>
            <person name="Hammar M."/>
            <person name="Sierralta W.D."/>
            <person name="Normark S."/>
        </authorList>
    </citation>
    <scope>NUCLEOTIDE SEQUENCE [GENOMIC DNA]</scope>
    <source>
        <strain>SR-11</strain>
    </source>
</reference>
<reference key="2">
    <citation type="journal article" date="2001" name="Nature">
        <title>Complete genome sequence of Salmonella enterica serovar Typhimurium LT2.</title>
        <authorList>
            <person name="McClelland M."/>
            <person name="Sanderson K.E."/>
            <person name="Spieth J."/>
            <person name="Clifton S.W."/>
            <person name="Latreille P."/>
            <person name="Courtney L."/>
            <person name="Porwollik S."/>
            <person name="Ali J."/>
            <person name="Dante M."/>
            <person name="Du F."/>
            <person name="Hou S."/>
            <person name="Layman D."/>
            <person name="Leonard S."/>
            <person name="Nguyen C."/>
            <person name="Scott K."/>
            <person name="Holmes A."/>
            <person name="Grewal N."/>
            <person name="Mulvaney E."/>
            <person name="Ryan E."/>
            <person name="Sun H."/>
            <person name="Florea L."/>
            <person name="Miller W."/>
            <person name="Stoneking T."/>
            <person name="Nhan M."/>
            <person name="Waterston R."/>
            <person name="Wilson R.K."/>
        </authorList>
    </citation>
    <scope>NUCLEOTIDE SEQUENCE [LARGE SCALE GENOMIC DNA]</scope>
    <source>
        <strain>LT2 / SGSC1412 / ATCC 700720</strain>
    </source>
</reference>
<name>CSGB_SALTY</name>